<comment type="catalytic activity">
    <reaction>
        <text>(S)-4-amino-5-oxopentanoate = 5-aminolevulinate</text>
        <dbReference type="Rhea" id="RHEA:14265"/>
        <dbReference type="ChEBI" id="CHEBI:57501"/>
        <dbReference type="ChEBI" id="CHEBI:356416"/>
        <dbReference type="EC" id="5.4.3.8"/>
    </reaction>
</comment>
<comment type="cofactor">
    <cofactor evidence="1">
        <name>pyridoxal 5'-phosphate</name>
        <dbReference type="ChEBI" id="CHEBI:597326"/>
    </cofactor>
</comment>
<comment type="pathway">
    <text>Porphyrin-containing compound metabolism; protoporphyrin-IX biosynthesis; 5-aminolevulinate from L-glutamyl-tRNA(Glu): step 2/2.</text>
</comment>
<comment type="subunit">
    <text evidence="1">Homodimer.</text>
</comment>
<comment type="subcellular location">
    <subcellularLocation>
        <location evidence="3">Cytoplasm</location>
    </subcellularLocation>
</comment>
<comment type="similarity">
    <text evidence="3">Belongs to the class-III pyridoxal-phosphate-dependent aminotransferase family. HemL subfamily.</text>
</comment>
<name>GSA_MYCBO</name>
<feature type="chain" id="PRO_0000120423" description="Glutamate-1-semialdehyde 2,1-aminomutase">
    <location>
        <begin position="1"/>
        <end position="462"/>
    </location>
</feature>
<feature type="region of interest" description="Disordered" evidence="2">
    <location>
        <begin position="178"/>
        <end position="200"/>
    </location>
</feature>
<feature type="compositionally biased region" description="Low complexity" evidence="2">
    <location>
        <begin position="182"/>
        <end position="192"/>
    </location>
</feature>
<feature type="modified residue" description="N6-(pyridoxal phosphate)lysine" evidence="1">
    <location>
        <position position="297"/>
    </location>
</feature>
<gene>
    <name type="primary">hemL</name>
    <name type="ordered locus">BQ2027_MB0537</name>
</gene>
<dbReference type="EC" id="5.4.3.8"/>
<dbReference type="EMBL" id="LT708304">
    <property type="protein sequence ID" value="SIT99132.1"/>
    <property type="molecule type" value="Genomic_DNA"/>
</dbReference>
<dbReference type="RefSeq" id="NP_854199.1">
    <property type="nucleotide sequence ID" value="NC_002945.3"/>
</dbReference>
<dbReference type="RefSeq" id="WP_003402844.1">
    <property type="nucleotide sequence ID" value="NC_002945.4"/>
</dbReference>
<dbReference type="SMR" id="P63507"/>
<dbReference type="PATRIC" id="fig|233413.5.peg.584"/>
<dbReference type="UniPathway" id="UPA00251">
    <property type="reaction ID" value="UER00317"/>
</dbReference>
<dbReference type="Proteomes" id="UP000001419">
    <property type="component" value="Chromosome"/>
</dbReference>
<dbReference type="GO" id="GO:0005737">
    <property type="term" value="C:cytoplasm"/>
    <property type="evidence" value="ECO:0007669"/>
    <property type="project" value="UniProtKB-SubCell"/>
</dbReference>
<dbReference type="GO" id="GO:0042286">
    <property type="term" value="F:glutamate-1-semialdehyde 2,1-aminomutase activity"/>
    <property type="evidence" value="ECO:0007669"/>
    <property type="project" value="UniProtKB-UniRule"/>
</dbReference>
<dbReference type="GO" id="GO:0030170">
    <property type="term" value="F:pyridoxal phosphate binding"/>
    <property type="evidence" value="ECO:0007669"/>
    <property type="project" value="InterPro"/>
</dbReference>
<dbReference type="GO" id="GO:0008483">
    <property type="term" value="F:transaminase activity"/>
    <property type="evidence" value="ECO:0007669"/>
    <property type="project" value="InterPro"/>
</dbReference>
<dbReference type="GO" id="GO:0006782">
    <property type="term" value="P:protoporphyrinogen IX biosynthetic process"/>
    <property type="evidence" value="ECO:0007669"/>
    <property type="project" value="UniProtKB-UniRule"/>
</dbReference>
<dbReference type="CDD" id="cd00610">
    <property type="entry name" value="OAT_like"/>
    <property type="match status" value="1"/>
</dbReference>
<dbReference type="FunFam" id="3.40.640.10:FF:000021">
    <property type="entry name" value="Glutamate-1-semialdehyde 2,1-aminomutase"/>
    <property type="match status" value="1"/>
</dbReference>
<dbReference type="Gene3D" id="3.90.1150.10">
    <property type="entry name" value="Aspartate Aminotransferase, domain 1"/>
    <property type="match status" value="1"/>
</dbReference>
<dbReference type="Gene3D" id="3.40.640.10">
    <property type="entry name" value="Type I PLP-dependent aspartate aminotransferase-like (Major domain)"/>
    <property type="match status" value="1"/>
</dbReference>
<dbReference type="HAMAP" id="MF_00375">
    <property type="entry name" value="HemL_aminotrans_3"/>
    <property type="match status" value="1"/>
</dbReference>
<dbReference type="InterPro" id="IPR004639">
    <property type="entry name" value="4pyrrol_synth_GluAld_NH2Trfase"/>
</dbReference>
<dbReference type="InterPro" id="IPR005814">
    <property type="entry name" value="Aminotrans_3"/>
</dbReference>
<dbReference type="InterPro" id="IPR049704">
    <property type="entry name" value="Aminotrans_3_PPA_site"/>
</dbReference>
<dbReference type="InterPro" id="IPR015424">
    <property type="entry name" value="PyrdxlP-dep_Trfase"/>
</dbReference>
<dbReference type="InterPro" id="IPR015421">
    <property type="entry name" value="PyrdxlP-dep_Trfase_major"/>
</dbReference>
<dbReference type="InterPro" id="IPR015422">
    <property type="entry name" value="PyrdxlP-dep_Trfase_small"/>
</dbReference>
<dbReference type="NCBIfam" id="TIGR00713">
    <property type="entry name" value="hemL"/>
    <property type="match status" value="1"/>
</dbReference>
<dbReference type="NCBIfam" id="NF000818">
    <property type="entry name" value="PRK00062.1"/>
    <property type="match status" value="1"/>
</dbReference>
<dbReference type="PANTHER" id="PTHR43713">
    <property type="entry name" value="GLUTAMATE-1-SEMIALDEHYDE 2,1-AMINOMUTASE"/>
    <property type="match status" value="1"/>
</dbReference>
<dbReference type="PANTHER" id="PTHR43713:SF3">
    <property type="entry name" value="GLUTAMATE-1-SEMIALDEHYDE 2,1-AMINOMUTASE 1, CHLOROPLASTIC-RELATED"/>
    <property type="match status" value="1"/>
</dbReference>
<dbReference type="Pfam" id="PF00202">
    <property type="entry name" value="Aminotran_3"/>
    <property type="match status" value="1"/>
</dbReference>
<dbReference type="SUPFAM" id="SSF53383">
    <property type="entry name" value="PLP-dependent transferases"/>
    <property type="match status" value="1"/>
</dbReference>
<dbReference type="PROSITE" id="PS00600">
    <property type="entry name" value="AA_TRANSFER_CLASS_3"/>
    <property type="match status" value="1"/>
</dbReference>
<sequence>MGSTEQATSRVRGAARTSAQLFEAACSVIPGGVNSPVRAFTAVGGTPRFITEAHGCWLIDADGNRYVDLVCSWGPMILGHAHPAVVEAVAKAAARGLSFGAPTPAETQLAGEIIGRVAPVERIRLVNSGTEATMSAVRLARGFTGRAKIVKFSGCYHGHVDALLADAGSGVATLGLCDDPQRPASPRSQSSRGLPSSPGVTGAAAADTIVLPYNDIDAVQQTFARFGEQIAAVITEASPGNMGVVPPGPGFNAALRAITAEHGALLILDEVMTGFRVSRSGWYGIDPVPADLFAFGKVMSGGMPAAAFGGRAEVMQRLAPLGPVYQAGTLSGNPVAVAAGLATLRAADDAVYTALDANADRLAGLLSEALTDAVVPHQISRAGNMLSVFFGETPVTDFASARASQTWRYPAFFHAMLDAGVYPPCSAFEAWFVSAALDDAAFGRIANALPAAARAAAQERPA</sequence>
<evidence type="ECO:0000250" key="1"/>
<evidence type="ECO:0000256" key="2">
    <source>
        <dbReference type="SAM" id="MobiDB-lite"/>
    </source>
</evidence>
<evidence type="ECO:0000305" key="3"/>
<reference key="1">
    <citation type="journal article" date="2003" name="Proc. Natl. Acad. Sci. U.S.A.">
        <title>The complete genome sequence of Mycobacterium bovis.</title>
        <authorList>
            <person name="Garnier T."/>
            <person name="Eiglmeier K."/>
            <person name="Camus J.-C."/>
            <person name="Medina N."/>
            <person name="Mansoor H."/>
            <person name="Pryor M."/>
            <person name="Duthoy S."/>
            <person name="Grondin S."/>
            <person name="Lacroix C."/>
            <person name="Monsempe C."/>
            <person name="Simon S."/>
            <person name="Harris B."/>
            <person name="Atkin R."/>
            <person name="Doggett J."/>
            <person name="Mayes R."/>
            <person name="Keating L."/>
            <person name="Wheeler P.R."/>
            <person name="Parkhill J."/>
            <person name="Barrell B.G."/>
            <person name="Cole S.T."/>
            <person name="Gordon S.V."/>
            <person name="Hewinson R.G."/>
        </authorList>
    </citation>
    <scope>NUCLEOTIDE SEQUENCE [LARGE SCALE GENOMIC DNA]</scope>
    <source>
        <strain>ATCC BAA-935 / AF2122/97</strain>
    </source>
</reference>
<reference key="2">
    <citation type="journal article" date="2017" name="Genome Announc.">
        <title>Updated reference genome sequence and annotation of Mycobacterium bovis AF2122/97.</title>
        <authorList>
            <person name="Malone K.M."/>
            <person name="Farrell D."/>
            <person name="Stuber T.P."/>
            <person name="Schubert O.T."/>
            <person name="Aebersold R."/>
            <person name="Robbe-Austerman S."/>
            <person name="Gordon S.V."/>
        </authorList>
    </citation>
    <scope>NUCLEOTIDE SEQUENCE [LARGE SCALE GENOMIC DNA]</scope>
    <scope>GENOME REANNOTATION</scope>
    <source>
        <strain>ATCC BAA-935 / AF2122/97</strain>
    </source>
</reference>
<proteinExistence type="inferred from homology"/>
<accession>P63507</accession>
<accession>A0A1R3XXR9</accession>
<accession>O06390</accession>
<accession>X2BFC4</accession>
<organism>
    <name type="scientific">Mycobacterium bovis (strain ATCC BAA-935 / AF2122/97)</name>
    <dbReference type="NCBI Taxonomy" id="233413"/>
    <lineage>
        <taxon>Bacteria</taxon>
        <taxon>Bacillati</taxon>
        <taxon>Actinomycetota</taxon>
        <taxon>Actinomycetes</taxon>
        <taxon>Mycobacteriales</taxon>
        <taxon>Mycobacteriaceae</taxon>
        <taxon>Mycobacterium</taxon>
        <taxon>Mycobacterium tuberculosis complex</taxon>
    </lineage>
</organism>
<protein>
    <recommendedName>
        <fullName>Glutamate-1-semialdehyde 2,1-aminomutase</fullName>
        <shortName>GSA</shortName>
        <ecNumber>5.4.3.8</ecNumber>
    </recommendedName>
    <alternativeName>
        <fullName>Glutamate-1-semialdehyde aminotransferase</fullName>
        <shortName>GSA-AT</shortName>
    </alternativeName>
</protein>
<keyword id="KW-0963">Cytoplasm</keyword>
<keyword id="KW-0413">Isomerase</keyword>
<keyword id="KW-0627">Porphyrin biosynthesis</keyword>
<keyword id="KW-0663">Pyridoxal phosphate</keyword>
<keyword id="KW-1185">Reference proteome</keyword>